<feature type="signal peptide" evidence="2">
    <location>
        <begin position="1"/>
        <end position="23"/>
    </location>
</feature>
<feature type="chain" id="PRO_0000403100" description="Probable L-type lectin-domain containing receptor kinase VII.2">
    <location>
        <begin position="24"/>
        <end position="681"/>
    </location>
</feature>
<feature type="topological domain" description="Extracellular" evidence="2">
    <location>
        <begin position="24"/>
        <end position="290"/>
    </location>
</feature>
<feature type="transmembrane region" description="Helical" evidence="2">
    <location>
        <begin position="291"/>
        <end position="311"/>
    </location>
</feature>
<feature type="topological domain" description="Cytoplasmic" evidence="2">
    <location>
        <begin position="312"/>
        <end position="681"/>
    </location>
</feature>
<feature type="domain" description="Protein kinase" evidence="3">
    <location>
        <begin position="349"/>
        <end position="624"/>
    </location>
</feature>
<feature type="region of interest" description="Legume-lectin like">
    <location>
        <begin position="24"/>
        <end position="260"/>
    </location>
</feature>
<feature type="active site" description="Proton acceptor" evidence="3 4">
    <location>
        <position position="475"/>
    </location>
</feature>
<feature type="binding site" evidence="3">
    <location>
        <begin position="355"/>
        <end position="363"/>
    </location>
    <ligand>
        <name>ATP</name>
        <dbReference type="ChEBI" id="CHEBI:30616"/>
    </ligand>
</feature>
<feature type="binding site" evidence="3">
    <location>
        <position position="376"/>
    </location>
    <ligand>
        <name>ATP</name>
        <dbReference type="ChEBI" id="CHEBI:30616"/>
    </ligand>
</feature>
<feature type="glycosylation site" description="N-linked (GlcNAc...) asparagine" evidence="2">
    <location>
        <position position="31"/>
    </location>
</feature>
<feature type="glycosylation site" description="N-linked (GlcNAc...) asparagine" evidence="2">
    <location>
        <position position="42"/>
    </location>
</feature>
<feature type="glycosylation site" description="N-linked (GlcNAc...) asparagine" evidence="2">
    <location>
        <position position="56"/>
    </location>
</feature>
<feature type="glycosylation site" description="N-linked (GlcNAc...) asparagine" evidence="2">
    <location>
        <position position="72"/>
    </location>
</feature>
<feature type="glycosylation site" description="N-linked (GlcNAc...) asparagine" evidence="2">
    <location>
        <position position="126"/>
    </location>
</feature>
<feature type="glycosylation site" description="N-linked (GlcNAc...) asparagine" evidence="2">
    <location>
        <position position="202"/>
    </location>
</feature>
<feature type="glycosylation site" description="N-linked (GlcNAc...) asparagine" evidence="2">
    <location>
        <position position="207"/>
    </location>
</feature>
<feature type="glycosylation site" description="N-linked (GlcNAc...) asparagine" evidence="2">
    <location>
        <position position="228"/>
    </location>
</feature>
<feature type="glycosylation site" description="N-linked (GlcNAc...) asparagine" evidence="2">
    <location>
        <position position="263"/>
    </location>
</feature>
<reference key="1">
    <citation type="journal article" date="1999" name="Nature">
        <title>Sequence and analysis of chromosome 4 of the plant Arabidopsis thaliana.</title>
        <authorList>
            <person name="Mayer K.F.X."/>
            <person name="Schueller C."/>
            <person name="Wambutt R."/>
            <person name="Murphy G."/>
            <person name="Volckaert G."/>
            <person name="Pohl T."/>
            <person name="Duesterhoeft A."/>
            <person name="Stiekema W."/>
            <person name="Entian K.-D."/>
            <person name="Terryn N."/>
            <person name="Harris B."/>
            <person name="Ansorge W."/>
            <person name="Brandt P."/>
            <person name="Grivell L.A."/>
            <person name="Rieger M."/>
            <person name="Weichselgartner M."/>
            <person name="de Simone V."/>
            <person name="Obermaier B."/>
            <person name="Mache R."/>
            <person name="Mueller M."/>
            <person name="Kreis M."/>
            <person name="Delseny M."/>
            <person name="Puigdomenech P."/>
            <person name="Watson M."/>
            <person name="Schmidtheini T."/>
            <person name="Reichert B."/>
            <person name="Portetelle D."/>
            <person name="Perez-Alonso M."/>
            <person name="Boutry M."/>
            <person name="Bancroft I."/>
            <person name="Vos P."/>
            <person name="Hoheisel J."/>
            <person name="Zimmermann W."/>
            <person name="Wedler H."/>
            <person name="Ridley P."/>
            <person name="Langham S.-A."/>
            <person name="McCullagh B."/>
            <person name="Bilham L."/>
            <person name="Robben J."/>
            <person name="van der Schueren J."/>
            <person name="Grymonprez B."/>
            <person name="Chuang Y.-J."/>
            <person name="Vandenbussche F."/>
            <person name="Braeken M."/>
            <person name="Weltjens I."/>
            <person name="Voet M."/>
            <person name="Bastiaens I."/>
            <person name="Aert R."/>
            <person name="Defoor E."/>
            <person name="Weitzenegger T."/>
            <person name="Bothe G."/>
            <person name="Ramsperger U."/>
            <person name="Hilbert H."/>
            <person name="Braun M."/>
            <person name="Holzer E."/>
            <person name="Brandt A."/>
            <person name="Peters S."/>
            <person name="van Staveren M."/>
            <person name="Dirkse W."/>
            <person name="Mooijman P."/>
            <person name="Klein Lankhorst R."/>
            <person name="Rose M."/>
            <person name="Hauf J."/>
            <person name="Koetter P."/>
            <person name="Berneiser S."/>
            <person name="Hempel S."/>
            <person name="Feldpausch M."/>
            <person name="Lamberth S."/>
            <person name="Van den Daele H."/>
            <person name="De Keyser A."/>
            <person name="Buysshaert C."/>
            <person name="Gielen J."/>
            <person name="Villarroel R."/>
            <person name="De Clercq R."/>
            <person name="van Montagu M."/>
            <person name="Rogers J."/>
            <person name="Cronin A."/>
            <person name="Quail M.A."/>
            <person name="Bray-Allen S."/>
            <person name="Clark L."/>
            <person name="Doggett J."/>
            <person name="Hall S."/>
            <person name="Kay M."/>
            <person name="Lennard N."/>
            <person name="McLay K."/>
            <person name="Mayes R."/>
            <person name="Pettett A."/>
            <person name="Rajandream M.A."/>
            <person name="Lyne M."/>
            <person name="Benes V."/>
            <person name="Rechmann S."/>
            <person name="Borkova D."/>
            <person name="Bloecker H."/>
            <person name="Scharfe M."/>
            <person name="Grimm M."/>
            <person name="Loehnert T.-H."/>
            <person name="Dose S."/>
            <person name="de Haan M."/>
            <person name="Maarse A.C."/>
            <person name="Schaefer M."/>
            <person name="Mueller-Auer S."/>
            <person name="Gabel C."/>
            <person name="Fuchs M."/>
            <person name="Fartmann B."/>
            <person name="Granderath K."/>
            <person name="Dauner D."/>
            <person name="Herzl A."/>
            <person name="Neumann S."/>
            <person name="Argiriou A."/>
            <person name="Vitale D."/>
            <person name="Liguori R."/>
            <person name="Piravandi E."/>
            <person name="Massenet O."/>
            <person name="Quigley F."/>
            <person name="Clabauld G."/>
            <person name="Muendlein A."/>
            <person name="Felber R."/>
            <person name="Schnabl S."/>
            <person name="Hiller R."/>
            <person name="Schmidt W."/>
            <person name="Lecharny A."/>
            <person name="Aubourg S."/>
            <person name="Chefdor F."/>
            <person name="Cooke R."/>
            <person name="Berger C."/>
            <person name="Monfort A."/>
            <person name="Casacuberta E."/>
            <person name="Gibbons T."/>
            <person name="Weber N."/>
            <person name="Vandenbol M."/>
            <person name="Bargues M."/>
            <person name="Terol J."/>
            <person name="Torres A."/>
            <person name="Perez-Perez A."/>
            <person name="Purnelle B."/>
            <person name="Bent E."/>
            <person name="Johnson S."/>
            <person name="Tacon D."/>
            <person name="Jesse T."/>
            <person name="Heijnen L."/>
            <person name="Schwarz S."/>
            <person name="Scholler P."/>
            <person name="Heber S."/>
            <person name="Francs P."/>
            <person name="Bielke C."/>
            <person name="Frishman D."/>
            <person name="Haase D."/>
            <person name="Lemcke K."/>
            <person name="Mewes H.-W."/>
            <person name="Stocker S."/>
            <person name="Zaccaria P."/>
            <person name="Bevan M."/>
            <person name="Wilson R.K."/>
            <person name="de la Bastide M."/>
            <person name="Habermann K."/>
            <person name="Parnell L."/>
            <person name="Dedhia N."/>
            <person name="Gnoj L."/>
            <person name="Schutz K."/>
            <person name="Huang E."/>
            <person name="Spiegel L."/>
            <person name="Sekhon M."/>
            <person name="Murray J."/>
            <person name="Sheet P."/>
            <person name="Cordes M."/>
            <person name="Abu-Threideh J."/>
            <person name="Stoneking T."/>
            <person name="Kalicki J."/>
            <person name="Graves T."/>
            <person name="Harmon G."/>
            <person name="Edwards J."/>
            <person name="Latreille P."/>
            <person name="Courtney L."/>
            <person name="Cloud J."/>
            <person name="Abbott A."/>
            <person name="Scott K."/>
            <person name="Johnson D."/>
            <person name="Minx P."/>
            <person name="Bentley D."/>
            <person name="Fulton B."/>
            <person name="Miller N."/>
            <person name="Greco T."/>
            <person name="Kemp K."/>
            <person name="Kramer J."/>
            <person name="Fulton L."/>
            <person name="Mardis E."/>
            <person name="Dante M."/>
            <person name="Pepin K."/>
            <person name="Hillier L.W."/>
            <person name="Nelson J."/>
            <person name="Spieth J."/>
            <person name="Ryan E."/>
            <person name="Andrews S."/>
            <person name="Geisel C."/>
            <person name="Layman D."/>
            <person name="Du H."/>
            <person name="Ali J."/>
            <person name="Berghoff A."/>
            <person name="Jones K."/>
            <person name="Drone K."/>
            <person name="Cotton M."/>
            <person name="Joshu C."/>
            <person name="Antonoiu B."/>
            <person name="Zidanic M."/>
            <person name="Strong C."/>
            <person name="Sun H."/>
            <person name="Lamar B."/>
            <person name="Yordan C."/>
            <person name="Ma P."/>
            <person name="Zhong J."/>
            <person name="Preston R."/>
            <person name="Vil D."/>
            <person name="Shekher M."/>
            <person name="Matero A."/>
            <person name="Shah R."/>
            <person name="Swaby I.K."/>
            <person name="O'Shaughnessy A."/>
            <person name="Rodriguez M."/>
            <person name="Hoffman J."/>
            <person name="Till S."/>
            <person name="Granat S."/>
            <person name="Shohdy N."/>
            <person name="Hasegawa A."/>
            <person name="Hameed A."/>
            <person name="Lodhi M."/>
            <person name="Johnson A."/>
            <person name="Chen E."/>
            <person name="Marra M.A."/>
            <person name="Martienssen R."/>
            <person name="McCombie W.R."/>
        </authorList>
    </citation>
    <scope>NUCLEOTIDE SEQUENCE [LARGE SCALE GENOMIC DNA]</scope>
    <source>
        <strain>cv. Columbia</strain>
    </source>
</reference>
<reference key="2">
    <citation type="journal article" date="2017" name="Plant J.">
        <title>Araport11: a complete reannotation of the Arabidopsis thaliana reference genome.</title>
        <authorList>
            <person name="Cheng C.Y."/>
            <person name="Krishnakumar V."/>
            <person name="Chan A.P."/>
            <person name="Thibaud-Nissen F."/>
            <person name="Schobel S."/>
            <person name="Town C.D."/>
        </authorList>
    </citation>
    <scope>GENOME REANNOTATION</scope>
    <source>
        <strain>cv. Columbia</strain>
    </source>
</reference>
<reference key="3">
    <citation type="journal article" date="1999" name="Plant Mol. Biol.">
        <title>Characterization of the Arabidopsis lecRK-a genes: members of a superfamily encoding putative receptors with an extracellular domain homologous to legume lectins.</title>
        <authorList>
            <person name="Herve C."/>
            <person name="Serres J."/>
            <person name="Dabos P."/>
            <person name="Canut H."/>
            <person name="Barre A."/>
            <person name="Rouge P."/>
            <person name="Lescure B."/>
        </authorList>
    </citation>
    <scope>GENE FAMILY</scope>
</reference>
<reference key="4">
    <citation type="journal article" date="2002" name="Crit. Rev. Plant Sci.">
        <title>Lectin receptor kinases in plants.</title>
        <authorList>
            <person name="Barre A."/>
            <person name="Herve C."/>
            <person name="Lescure B."/>
            <person name="Rouge P."/>
        </authorList>
    </citation>
    <scope>GENE FAMILY</scope>
</reference>
<reference key="5">
    <citation type="journal article" date="2009" name="J. Exp. Bot.">
        <title>Arabidopsis L-type lectin receptor kinases: phylogeny, classification, and expression profiles.</title>
        <authorList>
            <person name="Bouwmeester K."/>
            <person name="Govers F."/>
        </authorList>
    </citation>
    <scope>GENE FAMILY</scope>
    <scope>NOMENCLATURE</scope>
</reference>
<evidence type="ECO:0000250" key="1"/>
<evidence type="ECO:0000255" key="2"/>
<evidence type="ECO:0000255" key="3">
    <source>
        <dbReference type="PROSITE-ProRule" id="PRU00159"/>
    </source>
</evidence>
<evidence type="ECO:0000255" key="4">
    <source>
        <dbReference type="PROSITE-ProRule" id="PRU10027"/>
    </source>
</evidence>
<evidence type="ECO:0000305" key="5"/>
<proteinExistence type="inferred from homology"/>
<name>LRK72_ARATH</name>
<protein>
    <recommendedName>
        <fullName>Probable L-type lectin-domain containing receptor kinase VII.2</fullName>
        <shortName>Arabidopsis thaliana lectin-receptor kinase d</shortName>
        <shortName>AthlecRK-d</shortName>
        <shortName>LecRK-VII.2</shortName>
        <ecNumber>2.7.11.1</ecNumber>
    </recommendedName>
</protein>
<comment type="catalytic activity">
    <reaction>
        <text>L-seryl-[protein] + ATP = O-phospho-L-seryl-[protein] + ADP + H(+)</text>
        <dbReference type="Rhea" id="RHEA:17989"/>
        <dbReference type="Rhea" id="RHEA-COMP:9863"/>
        <dbReference type="Rhea" id="RHEA-COMP:11604"/>
        <dbReference type="ChEBI" id="CHEBI:15378"/>
        <dbReference type="ChEBI" id="CHEBI:29999"/>
        <dbReference type="ChEBI" id="CHEBI:30616"/>
        <dbReference type="ChEBI" id="CHEBI:83421"/>
        <dbReference type="ChEBI" id="CHEBI:456216"/>
        <dbReference type="EC" id="2.7.11.1"/>
    </reaction>
</comment>
<comment type="catalytic activity">
    <reaction>
        <text>L-threonyl-[protein] + ATP = O-phospho-L-threonyl-[protein] + ADP + H(+)</text>
        <dbReference type="Rhea" id="RHEA:46608"/>
        <dbReference type="Rhea" id="RHEA-COMP:11060"/>
        <dbReference type="Rhea" id="RHEA-COMP:11605"/>
        <dbReference type="ChEBI" id="CHEBI:15378"/>
        <dbReference type="ChEBI" id="CHEBI:30013"/>
        <dbReference type="ChEBI" id="CHEBI:30616"/>
        <dbReference type="ChEBI" id="CHEBI:61977"/>
        <dbReference type="ChEBI" id="CHEBI:456216"/>
        <dbReference type="EC" id="2.7.11.1"/>
    </reaction>
</comment>
<comment type="subcellular location">
    <subcellularLocation>
        <location evidence="1">Cell membrane</location>
        <topology evidence="1">Single-pass type I membrane protein</topology>
    </subcellularLocation>
</comment>
<comment type="similarity">
    <text evidence="5">In the C-terminal section; belongs to the protein kinase superfamily. Ser/Thr protein kinase family.</text>
</comment>
<comment type="similarity">
    <text evidence="5">In the N-terminal section; belongs to the leguminous lectin family.</text>
</comment>
<comment type="sequence caution" evidence="5">
    <conflict type="erroneous gene model prediction">
        <sequence resource="EMBL-CDS" id="CAA16875"/>
    </conflict>
</comment>
<comment type="sequence caution" evidence="5">
    <conflict type="erroneous gene model prediction">
        <sequence resource="EMBL-CDS" id="CAB79637"/>
    </conflict>
</comment>
<dbReference type="EC" id="2.7.11.1"/>
<dbReference type="EMBL" id="AL021749">
    <property type="protein sequence ID" value="CAA16875.1"/>
    <property type="status" value="ALT_SEQ"/>
    <property type="molecule type" value="Genomic_DNA"/>
</dbReference>
<dbReference type="EMBL" id="AL161572">
    <property type="protein sequence ID" value="CAB79637.1"/>
    <property type="status" value="ALT_SEQ"/>
    <property type="molecule type" value="Genomic_DNA"/>
</dbReference>
<dbReference type="EMBL" id="CP002687">
    <property type="protein sequence ID" value="AEE85472.2"/>
    <property type="molecule type" value="Genomic_DNA"/>
</dbReference>
<dbReference type="PIR" id="T04606">
    <property type="entry name" value="T04606"/>
</dbReference>
<dbReference type="RefSeq" id="NP_001320081.1">
    <property type="nucleotide sequence ID" value="NM_001341911.1"/>
</dbReference>
<dbReference type="SMR" id="O49445"/>
<dbReference type="FunCoup" id="O49445">
    <property type="interactions" value="3"/>
</dbReference>
<dbReference type="STRING" id="3702.O49445"/>
<dbReference type="GlyCosmos" id="O49445">
    <property type="glycosylation" value="9 sites, No reported glycans"/>
</dbReference>
<dbReference type="GlyGen" id="O49445">
    <property type="glycosylation" value="9 sites"/>
</dbReference>
<dbReference type="iPTMnet" id="O49445"/>
<dbReference type="PaxDb" id="3702-AT4G28350.1"/>
<dbReference type="ProteomicsDB" id="238429"/>
<dbReference type="EnsemblPlants" id="AT4G28350.1">
    <property type="protein sequence ID" value="AT4G28350.1"/>
    <property type="gene ID" value="AT4G28350"/>
</dbReference>
<dbReference type="GeneID" id="828950"/>
<dbReference type="Gramene" id="AT4G28350.1">
    <property type="protein sequence ID" value="AT4G28350.1"/>
    <property type="gene ID" value="AT4G28350"/>
</dbReference>
<dbReference type="KEGG" id="ath:AT4G28350"/>
<dbReference type="Araport" id="AT4G28350"/>
<dbReference type="TAIR" id="AT4G28350">
    <property type="gene designation" value="LECRK-VII.2"/>
</dbReference>
<dbReference type="eggNOG" id="ENOG502QRZ3">
    <property type="taxonomic scope" value="Eukaryota"/>
</dbReference>
<dbReference type="HOGENOM" id="CLU_000288_62_3_1"/>
<dbReference type="InParanoid" id="O49445"/>
<dbReference type="OMA" id="DCHEASM"/>
<dbReference type="PhylomeDB" id="O49445"/>
<dbReference type="PRO" id="PR:O49445"/>
<dbReference type="Proteomes" id="UP000006548">
    <property type="component" value="Chromosome 4"/>
</dbReference>
<dbReference type="ExpressionAtlas" id="O49445">
    <property type="expression patterns" value="baseline and differential"/>
</dbReference>
<dbReference type="GO" id="GO:0005886">
    <property type="term" value="C:plasma membrane"/>
    <property type="evidence" value="ECO:0007669"/>
    <property type="project" value="UniProtKB-SubCell"/>
</dbReference>
<dbReference type="GO" id="GO:0005524">
    <property type="term" value="F:ATP binding"/>
    <property type="evidence" value="ECO:0007669"/>
    <property type="project" value="UniProtKB-KW"/>
</dbReference>
<dbReference type="GO" id="GO:0030246">
    <property type="term" value="F:carbohydrate binding"/>
    <property type="evidence" value="ECO:0007669"/>
    <property type="project" value="UniProtKB-KW"/>
</dbReference>
<dbReference type="GO" id="GO:0106310">
    <property type="term" value="F:protein serine kinase activity"/>
    <property type="evidence" value="ECO:0007669"/>
    <property type="project" value="RHEA"/>
</dbReference>
<dbReference type="GO" id="GO:0004674">
    <property type="term" value="F:protein serine/threonine kinase activity"/>
    <property type="evidence" value="ECO:0007669"/>
    <property type="project" value="UniProtKB-KW"/>
</dbReference>
<dbReference type="CDD" id="cd06899">
    <property type="entry name" value="lectin_legume_LecRK_Arcelin_ConA"/>
    <property type="match status" value="1"/>
</dbReference>
<dbReference type="CDD" id="cd14066">
    <property type="entry name" value="STKc_IRAK"/>
    <property type="match status" value="1"/>
</dbReference>
<dbReference type="FunFam" id="1.10.510.10:FF:000108">
    <property type="entry name" value="L-type lectin-domain containing receptor kinase S.4"/>
    <property type="match status" value="1"/>
</dbReference>
<dbReference type="FunFam" id="2.60.120.200:FF:000246">
    <property type="entry name" value="L-type lectin-domain containing receptor kinase V.9"/>
    <property type="match status" value="1"/>
</dbReference>
<dbReference type="Gene3D" id="2.60.120.200">
    <property type="match status" value="1"/>
</dbReference>
<dbReference type="Gene3D" id="3.30.200.20">
    <property type="entry name" value="Phosphorylase Kinase, domain 1"/>
    <property type="match status" value="1"/>
</dbReference>
<dbReference type="Gene3D" id="1.10.510.10">
    <property type="entry name" value="Transferase(Phosphotransferase) domain 1"/>
    <property type="match status" value="1"/>
</dbReference>
<dbReference type="InterPro" id="IPR013320">
    <property type="entry name" value="ConA-like_dom_sf"/>
</dbReference>
<dbReference type="InterPro" id="IPR011009">
    <property type="entry name" value="Kinase-like_dom_sf"/>
</dbReference>
<dbReference type="InterPro" id="IPR050528">
    <property type="entry name" value="L-type_Lectin-RKs"/>
</dbReference>
<dbReference type="InterPro" id="IPR001220">
    <property type="entry name" value="Legume_lectin_dom"/>
</dbReference>
<dbReference type="InterPro" id="IPR000719">
    <property type="entry name" value="Prot_kinase_dom"/>
</dbReference>
<dbReference type="InterPro" id="IPR017441">
    <property type="entry name" value="Protein_kinase_ATP_BS"/>
</dbReference>
<dbReference type="InterPro" id="IPR008271">
    <property type="entry name" value="Ser/Thr_kinase_AS"/>
</dbReference>
<dbReference type="PANTHER" id="PTHR27007">
    <property type="match status" value="1"/>
</dbReference>
<dbReference type="Pfam" id="PF00139">
    <property type="entry name" value="Lectin_legB"/>
    <property type="match status" value="1"/>
</dbReference>
<dbReference type="Pfam" id="PF00069">
    <property type="entry name" value="Pkinase"/>
    <property type="match status" value="1"/>
</dbReference>
<dbReference type="SMART" id="SM00220">
    <property type="entry name" value="S_TKc"/>
    <property type="match status" value="1"/>
</dbReference>
<dbReference type="SUPFAM" id="SSF49899">
    <property type="entry name" value="Concanavalin A-like lectins/glucanases"/>
    <property type="match status" value="1"/>
</dbReference>
<dbReference type="SUPFAM" id="SSF56112">
    <property type="entry name" value="Protein kinase-like (PK-like)"/>
    <property type="match status" value="1"/>
</dbReference>
<dbReference type="PROSITE" id="PS00107">
    <property type="entry name" value="PROTEIN_KINASE_ATP"/>
    <property type="match status" value="1"/>
</dbReference>
<dbReference type="PROSITE" id="PS50011">
    <property type="entry name" value="PROTEIN_KINASE_DOM"/>
    <property type="match status" value="1"/>
</dbReference>
<dbReference type="PROSITE" id="PS00108">
    <property type="entry name" value="PROTEIN_KINASE_ST"/>
    <property type="match status" value="1"/>
</dbReference>
<accession>O49445</accession>
<accession>F4JL83</accession>
<sequence>MFSKVSILLFSLASLLLFRSTTGIEFIYNSNFTTTNTLLLGNATVKSPPSILTLTNQTTFSIGRGLYPSRINASSSSASPLPFATSFIFSMAPFKHLSPGHGFAFVFLPFSETSAASSSQHLGLFNFTNNGDPNSRIFAVEFDVFANQEFNDINDNHVGVDVNSLTSVASETAGFYGGRDGQRFTELKLNSGENYQAWIEFNGSAINVTMARASSRKPIRPLISIPLNLTGVLLDDMFVGFTASTGQLVQSHRILSWSFSNSNFSIGDALITRNLPSFKLSGDSVLKSKGFIAGVSSGVVLLVSVIGLLCFYVVRRRRQRLEGDVEDWETEYWPHRVQYKDVLEATKGFSDENMIGYGGNSKVYRGVLEGKEVAVKRIMMSPRESVGATSEFLAEVSSLGRLRHKNIVGLKGWSKKGGESLILIYEYMENGSVDKRIFDCNEMLNWEERMRVIRDLASGMLYLHEGWETKVLHRDIKSSNVLLDKDMNARVGDFGLAKLQNTSKEMVSTTHVVGTAGYMAPELVKTGRASAQTDVYSFGVFVLEVVCGRRPIEEGREGIVEWIWGLMEKDKVVDGLDERIKANGVFVVEEVEMALRIGLLCVHPDPRVRPKMRQVVQILEQGRLVEDGGEREISLLERVKSSYLLETGEGSRQQHPTFQDVWNSSSYSNSFQTYDSILHGR</sequence>
<organism>
    <name type="scientific">Arabidopsis thaliana</name>
    <name type="common">Mouse-ear cress</name>
    <dbReference type="NCBI Taxonomy" id="3702"/>
    <lineage>
        <taxon>Eukaryota</taxon>
        <taxon>Viridiplantae</taxon>
        <taxon>Streptophyta</taxon>
        <taxon>Embryophyta</taxon>
        <taxon>Tracheophyta</taxon>
        <taxon>Spermatophyta</taxon>
        <taxon>Magnoliopsida</taxon>
        <taxon>eudicotyledons</taxon>
        <taxon>Gunneridae</taxon>
        <taxon>Pentapetalae</taxon>
        <taxon>rosids</taxon>
        <taxon>malvids</taxon>
        <taxon>Brassicales</taxon>
        <taxon>Brassicaceae</taxon>
        <taxon>Camelineae</taxon>
        <taxon>Arabidopsis</taxon>
    </lineage>
</organism>
<keyword id="KW-0067">ATP-binding</keyword>
<keyword id="KW-1003">Cell membrane</keyword>
<keyword id="KW-0325">Glycoprotein</keyword>
<keyword id="KW-0418">Kinase</keyword>
<keyword id="KW-0430">Lectin</keyword>
<keyword id="KW-0472">Membrane</keyword>
<keyword id="KW-0547">Nucleotide-binding</keyword>
<keyword id="KW-0675">Receptor</keyword>
<keyword id="KW-1185">Reference proteome</keyword>
<keyword id="KW-0723">Serine/threonine-protein kinase</keyword>
<keyword id="KW-0732">Signal</keyword>
<keyword id="KW-0808">Transferase</keyword>
<keyword id="KW-0812">Transmembrane</keyword>
<keyword id="KW-1133">Transmembrane helix</keyword>
<gene>
    <name type="primary">LECRK72</name>
    <name type="synonym">LECRKD</name>
    <name type="ordered locus">At4g28350</name>
    <name type="ORF">F20O9.40</name>
</gene>